<dbReference type="EC" id="2.4.1.18" evidence="1"/>
<dbReference type="EMBL" id="CP001252">
    <property type="protein sequence ID" value="ACK47513.1"/>
    <property type="molecule type" value="Genomic_DNA"/>
</dbReference>
<dbReference type="RefSeq" id="WP_012588209.1">
    <property type="nucleotide sequence ID" value="NC_011663.1"/>
</dbReference>
<dbReference type="SMR" id="B8EAX1"/>
<dbReference type="CAZy" id="CBM48">
    <property type="family name" value="Carbohydrate-Binding Module Family 48"/>
</dbReference>
<dbReference type="CAZy" id="GH13">
    <property type="family name" value="Glycoside Hydrolase Family 13"/>
</dbReference>
<dbReference type="KEGG" id="sbp:Sbal223_3028"/>
<dbReference type="HOGENOM" id="CLU_004245_3_2_6"/>
<dbReference type="UniPathway" id="UPA00164"/>
<dbReference type="Proteomes" id="UP000002507">
    <property type="component" value="Chromosome"/>
</dbReference>
<dbReference type="GO" id="GO:0005829">
    <property type="term" value="C:cytosol"/>
    <property type="evidence" value="ECO:0007669"/>
    <property type="project" value="TreeGrafter"/>
</dbReference>
<dbReference type="GO" id="GO:0003844">
    <property type="term" value="F:1,4-alpha-glucan branching enzyme activity"/>
    <property type="evidence" value="ECO:0007669"/>
    <property type="project" value="UniProtKB-UniRule"/>
</dbReference>
<dbReference type="GO" id="GO:0043169">
    <property type="term" value="F:cation binding"/>
    <property type="evidence" value="ECO:0007669"/>
    <property type="project" value="InterPro"/>
</dbReference>
<dbReference type="GO" id="GO:0004553">
    <property type="term" value="F:hydrolase activity, hydrolyzing O-glycosyl compounds"/>
    <property type="evidence" value="ECO:0007669"/>
    <property type="project" value="InterPro"/>
</dbReference>
<dbReference type="GO" id="GO:0005978">
    <property type="term" value="P:glycogen biosynthetic process"/>
    <property type="evidence" value="ECO:0007669"/>
    <property type="project" value="UniProtKB-UniRule"/>
</dbReference>
<dbReference type="CDD" id="cd11322">
    <property type="entry name" value="AmyAc_Glg_BE"/>
    <property type="match status" value="1"/>
</dbReference>
<dbReference type="CDD" id="cd02855">
    <property type="entry name" value="E_set_GBE_prok_N"/>
    <property type="match status" value="1"/>
</dbReference>
<dbReference type="FunFam" id="2.60.40.10:FF:000169">
    <property type="entry name" value="1,4-alpha-glucan branching enzyme GlgB"/>
    <property type="match status" value="1"/>
</dbReference>
<dbReference type="FunFam" id="2.60.40.1180:FF:000002">
    <property type="entry name" value="1,4-alpha-glucan branching enzyme GlgB"/>
    <property type="match status" value="1"/>
</dbReference>
<dbReference type="FunFam" id="3.20.20.80:FF:000003">
    <property type="entry name" value="1,4-alpha-glucan branching enzyme GlgB"/>
    <property type="match status" value="1"/>
</dbReference>
<dbReference type="Gene3D" id="3.20.20.80">
    <property type="entry name" value="Glycosidases"/>
    <property type="match status" value="1"/>
</dbReference>
<dbReference type="Gene3D" id="2.60.40.1180">
    <property type="entry name" value="Golgi alpha-mannosidase II"/>
    <property type="match status" value="1"/>
</dbReference>
<dbReference type="Gene3D" id="2.60.40.10">
    <property type="entry name" value="Immunoglobulins"/>
    <property type="match status" value="1"/>
</dbReference>
<dbReference type="HAMAP" id="MF_00685">
    <property type="entry name" value="GlgB"/>
    <property type="match status" value="1"/>
</dbReference>
<dbReference type="InterPro" id="IPR006048">
    <property type="entry name" value="A-amylase/branching_C"/>
</dbReference>
<dbReference type="InterPro" id="IPR037439">
    <property type="entry name" value="Branching_enzy"/>
</dbReference>
<dbReference type="InterPro" id="IPR006407">
    <property type="entry name" value="GlgB"/>
</dbReference>
<dbReference type="InterPro" id="IPR054169">
    <property type="entry name" value="GlgB_N"/>
</dbReference>
<dbReference type="InterPro" id="IPR044143">
    <property type="entry name" value="GlgB_N_E_set_prok"/>
</dbReference>
<dbReference type="InterPro" id="IPR006047">
    <property type="entry name" value="Glyco_hydro_13_cat_dom"/>
</dbReference>
<dbReference type="InterPro" id="IPR004193">
    <property type="entry name" value="Glyco_hydro_13_N"/>
</dbReference>
<dbReference type="InterPro" id="IPR013780">
    <property type="entry name" value="Glyco_hydro_b"/>
</dbReference>
<dbReference type="InterPro" id="IPR017853">
    <property type="entry name" value="Glycoside_hydrolase_SF"/>
</dbReference>
<dbReference type="InterPro" id="IPR013783">
    <property type="entry name" value="Ig-like_fold"/>
</dbReference>
<dbReference type="InterPro" id="IPR014756">
    <property type="entry name" value="Ig_E-set"/>
</dbReference>
<dbReference type="NCBIfam" id="TIGR01515">
    <property type="entry name" value="branching_enzym"/>
    <property type="match status" value="1"/>
</dbReference>
<dbReference type="NCBIfam" id="NF003811">
    <property type="entry name" value="PRK05402.1"/>
    <property type="match status" value="1"/>
</dbReference>
<dbReference type="NCBIfam" id="NF008967">
    <property type="entry name" value="PRK12313.1"/>
    <property type="match status" value="1"/>
</dbReference>
<dbReference type="PANTHER" id="PTHR43651">
    <property type="entry name" value="1,4-ALPHA-GLUCAN-BRANCHING ENZYME"/>
    <property type="match status" value="1"/>
</dbReference>
<dbReference type="PANTHER" id="PTHR43651:SF3">
    <property type="entry name" value="1,4-ALPHA-GLUCAN-BRANCHING ENZYME"/>
    <property type="match status" value="1"/>
</dbReference>
<dbReference type="Pfam" id="PF00128">
    <property type="entry name" value="Alpha-amylase"/>
    <property type="match status" value="1"/>
</dbReference>
<dbReference type="Pfam" id="PF02806">
    <property type="entry name" value="Alpha-amylase_C"/>
    <property type="match status" value="1"/>
</dbReference>
<dbReference type="Pfam" id="PF02922">
    <property type="entry name" value="CBM_48"/>
    <property type="match status" value="1"/>
</dbReference>
<dbReference type="Pfam" id="PF22019">
    <property type="entry name" value="GlgB_N"/>
    <property type="match status" value="1"/>
</dbReference>
<dbReference type="PIRSF" id="PIRSF000463">
    <property type="entry name" value="GlgB"/>
    <property type="match status" value="1"/>
</dbReference>
<dbReference type="SMART" id="SM00642">
    <property type="entry name" value="Aamy"/>
    <property type="match status" value="1"/>
</dbReference>
<dbReference type="SUPFAM" id="SSF51445">
    <property type="entry name" value="(Trans)glycosidases"/>
    <property type="match status" value="1"/>
</dbReference>
<dbReference type="SUPFAM" id="SSF81296">
    <property type="entry name" value="E set domains"/>
    <property type="match status" value="1"/>
</dbReference>
<dbReference type="SUPFAM" id="SSF51011">
    <property type="entry name" value="Glycosyl hydrolase domain"/>
    <property type="match status" value="1"/>
</dbReference>
<comment type="function">
    <text evidence="1">Catalyzes the formation of the alpha-1,6-glucosidic linkages in glycogen by scission of a 1,4-alpha-linked oligosaccharide from growing alpha-1,4-glucan chains and the subsequent attachment of the oligosaccharide to the alpha-1,6 position.</text>
</comment>
<comment type="catalytic activity">
    <reaction evidence="1">
        <text>Transfers a segment of a (1-&gt;4)-alpha-D-glucan chain to a primary hydroxy group in a similar glucan chain.</text>
        <dbReference type="EC" id="2.4.1.18"/>
    </reaction>
</comment>
<comment type="pathway">
    <text evidence="1">Glycan biosynthesis; glycogen biosynthesis.</text>
</comment>
<comment type="subunit">
    <text evidence="1">Monomer.</text>
</comment>
<comment type="similarity">
    <text evidence="1">Belongs to the glycosyl hydrolase 13 family. GlgB subfamily.</text>
</comment>
<proteinExistence type="inferred from homology"/>
<gene>
    <name evidence="1" type="primary">glgB</name>
    <name type="ordered locus">Sbal223_3028</name>
</gene>
<accession>B8EAX1</accession>
<evidence type="ECO:0000255" key="1">
    <source>
        <dbReference type="HAMAP-Rule" id="MF_00685"/>
    </source>
</evidence>
<feature type="chain" id="PRO_1000147761" description="1,4-alpha-glucan branching enzyme GlgB">
    <location>
        <begin position="1"/>
        <end position="743"/>
    </location>
</feature>
<feature type="active site" description="Nucleophile" evidence="1">
    <location>
        <position position="416"/>
    </location>
</feature>
<feature type="active site" description="Proton donor" evidence="1">
    <location>
        <position position="469"/>
    </location>
</feature>
<sequence length="743" mass="84350">MMTQANAYFYDGADVALLNGQYTDVFSLLGMHSANEGKALIVRCFLRNALSVDVISIKDGRKVASLDKVNEQGLFAGTLGRRVKPFLYLLRVEYPQCQLDIVDPYQFDSLLNSDDIYLFGEGSAERAYEFLGANWRQTQGVEGVHFCVWAPNAKRVSVVGDFNHWDDTRHVMRQHLANGLWELFLPNVVEGAHYKFDLVYQNGERHAKSDPMATQMECAPHNASIVPPKAHHSWNDTAWMSKRAATAWHKAPMSAYEVHLGSWRRKGEQGEQYLDYQDLIEQLIPYVKEQGFTHIELMPISEFPFDGSWGYQPVGLYAPTHRFGDANGLKAFVDACHQAGIGIILDWVSAHFPKDPHGLVRFDGTCLYEHEDPRKGTHPDWDTLIYNYDRGEVRSFLLSNACYWLREFHFDGLRLDAVSSMLYLDYSREPGQWLPNTYGGRENLEAINFLQILNQRLYQAFPGICMIAEESTAFAGVTKPTDQQGLGFGFKWNMGWMNDSLSYLGRDPLYRQFHHHQLTFSLMYAYTEQFMLSVSHDEVVHGKGSLLHKIPGDDWQKFATLRAYYGFMWGHPGKKLLFMGCEFGQRNEWNHNQSLDWHLLAYEPHQGVQRWLKDLNHLYQAMPALSVQDYEGAGFSWLDCENSRDSIFTFVRYGLAGDAPLVFVINMTPQLHTGFRIGLPLAGDYREYLNSDSQIYGGSNQGNAGTVVAESLPWQGMAQSALITVPPLGCLVIGPATGLAEAN</sequence>
<protein>
    <recommendedName>
        <fullName evidence="1">1,4-alpha-glucan branching enzyme GlgB</fullName>
        <ecNumber evidence="1">2.4.1.18</ecNumber>
    </recommendedName>
    <alternativeName>
        <fullName evidence="1">1,4-alpha-D-glucan:1,4-alpha-D-glucan 6-glucosyl-transferase</fullName>
    </alternativeName>
    <alternativeName>
        <fullName evidence="1">Alpha-(1-&gt;4)-glucan branching enzyme</fullName>
    </alternativeName>
    <alternativeName>
        <fullName evidence="1">Glycogen branching enzyme</fullName>
        <shortName evidence="1">BE</shortName>
    </alternativeName>
</protein>
<organism>
    <name type="scientific">Shewanella baltica (strain OS223)</name>
    <dbReference type="NCBI Taxonomy" id="407976"/>
    <lineage>
        <taxon>Bacteria</taxon>
        <taxon>Pseudomonadati</taxon>
        <taxon>Pseudomonadota</taxon>
        <taxon>Gammaproteobacteria</taxon>
        <taxon>Alteromonadales</taxon>
        <taxon>Shewanellaceae</taxon>
        <taxon>Shewanella</taxon>
    </lineage>
</organism>
<keyword id="KW-0119">Carbohydrate metabolism</keyword>
<keyword id="KW-0320">Glycogen biosynthesis</keyword>
<keyword id="KW-0321">Glycogen metabolism</keyword>
<keyword id="KW-0328">Glycosyltransferase</keyword>
<keyword id="KW-0808">Transferase</keyword>
<reference key="1">
    <citation type="submission" date="2008-12" db="EMBL/GenBank/DDBJ databases">
        <title>Complete sequence of chromosome of Shewanella baltica OS223.</title>
        <authorList>
            <consortium name="US DOE Joint Genome Institute"/>
            <person name="Lucas S."/>
            <person name="Copeland A."/>
            <person name="Lapidus A."/>
            <person name="Glavina del Rio T."/>
            <person name="Dalin E."/>
            <person name="Tice H."/>
            <person name="Bruce D."/>
            <person name="Goodwin L."/>
            <person name="Pitluck S."/>
            <person name="Chertkov O."/>
            <person name="Meincke L."/>
            <person name="Brettin T."/>
            <person name="Detter J.C."/>
            <person name="Han C."/>
            <person name="Kuske C.R."/>
            <person name="Larimer F."/>
            <person name="Land M."/>
            <person name="Hauser L."/>
            <person name="Kyrpides N."/>
            <person name="Ovchinnikova G."/>
            <person name="Brettar I."/>
            <person name="Rodrigues J."/>
            <person name="Konstantinidis K."/>
            <person name="Tiedje J."/>
        </authorList>
    </citation>
    <scope>NUCLEOTIDE SEQUENCE [LARGE SCALE GENOMIC DNA]</scope>
    <source>
        <strain>OS223</strain>
    </source>
</reference>
<name>GLGB_SHEB2</name>